<dbReference type="EMBL" id="CP000521">
    <property type="protein sequence ID" value="ABO10498.2"/>
    <property type="molecule type" value="Genomic_DNA"/>
</dbReference>
<dbReference type="RefSeq" id="WP_000964767.1">
    <property type="nucleotide sequence ID" value="NZ_CACVBA010000001.1"/>
</dbReference>
<dbReference type="SMR" id="A3M0Q4"/>
<dbReference type="KEGG" id="acb:A1S_0001"/>
<dbReference type="HOGENOM" id="CLU_026910_0_1_6"/>
<dbReference type="GO" id="GO:0005737">
    <property type="term" value="C:cytoplasm"/>
    <property type="evidence" value="ECO:0007669"/>
    <property type="project" value="UniProtKB-SubCell"/>
</dbReference>
<dbReference type="GO" id="GO:0005886">
    <property type="term" value="C:plasma membrane"/>
    <property type="evidence" value="ECO:0007669"/>
    <property type="project" value="TreeGrafter"/>
</dbReference>
<dbReference type="GO" id="GO:0005524">
    <property type="term" value="F:ATP binding"/>
    <property type="evidence" value="ECO:0007669"/>
    <property type="project" value="UniProtKB-UniRule"/>
</dbReference>
<dbReference type="GO" id="GO:0016887">
    <property type="term" value="F:ATP hydrolysis activity"/>
    <property type="evidence" value="ECO:0007669"/>
    <property type="project" value="InterPro"/>
</dbReference>
<dbReference type="GO" id="GO:0003688">
    <property type="term" value="F:DNA replication origin binding"/>
    <property type="evidence" value="ECO:0007669"/>
    <property type="project" value="UniProtKB-UniRule"/>
</dbReference>
<dbReference type="GO" id="GO:0008289">
    <property type="term" value="F:lipid binding"/>
    <property type="evidence" value="ECO:0007669"/>
    <property type="project" value="UniProtKB-KW"/>
</dbReference>
<dbReference type="GO" id="GO:0006270">
    <property type="term" value="P:DNA replication initiation"/>
    <property type="evidence" value="ECO:0007669"/>
    <property type="project" value="UniProtKB-UniRule"/>
</dbReference>
<dbReference type="GO" id="GO:0006275">
    <property type="term" value="P:regulation of DNA replication"/>
    <property type="evidence" value="ECO:0007669"/>
    <property type="project" value="UniProtKB-UniRule"/>
</dbReference>
<dbReference type="CDD" id="cd00009">
    <property type="entry name" value="AAA"/>
    <property type="match status" value="1"/>
</dbReference>
<dbReference type="CDD" id="cd06571">
    <property type="entry name" value="Bac_DnaA_C"/>
    <property type="match status" value="1"/>
</dbReference>
<dbReference type="FunFam" id="1.10.8.60:FF:000003">
    <property type="entry name" value="Chromosomal replication initiator protein DnaA"/>
    <property type="match status" value="1"/>
</dbReference>
<dbReference type="FunFam" id="3.40.50.300:FF:000668">
    <property type="entry name" value="Chromosomal replication initiator protein DnaA"/>
    <property type="match status" value="1"/>
</dbReference>
<dbReference type="Gene3D" id="1.10.1750.10">
    <property type="match status" value="1"/>
</dbReference>
<dbReference type="Gene3D" id="1.10.8.60">
    <property type="match status" value="1"/>
</dbReference>
<dbReference type="Gene3D" id="3.30.300.180">
    <property type="match status" value="1"/>
</dbReference>
<dbReference type="Gene3D" id="3.40.50.300">
    <property type="entry name" value="P-loop containing nucleotide triphosphate hydrolases"/>
    <property type="match status" value="1"/>
</dbReference>
<dbReference type="HAMAP" id="MF_00377">
    <property type="entry name" value="DnaA_bact"/>
    <property type="match status" value="1"/>
</dbReference>
<dbReference type="InterPro" id="IPR003593">
    <property type="entry name" value="AAA+_ATPase"/>
</dbReference>
<dbReference type="InterPro" id="IPR001957">
    <property type="entry name" value="Chromosome_initiator_DnaA"/>
</dbReference>
<dbReference type="InterPro" id="IPR020591">
    <property type="entry name" value="Chromosome_initiator_DnaA-like"/>
</dbReference>
<dbReference type="InterPro" id="IPR018312">
    <property type="entry name" value="Chromosome_initiator_DnaA_CS"/>
</dbReference>
<dbReference type="InterPro" id="IPR013159">
    <property type="entry name" value="DnaA_C"/>
</dbReference>
<dbReference type="InterPro" id="IPR013317">
    <property type="entry name" value="DnaA_dom"/>
</dbReference>
<dbReference type="InterPro" id="IPR024633">
    <property type="entry name" value="DnaA_N_dom"/>
</dbReference>
<dbReference type="InterPro" id="IPR038454">
    <property type="entry name" value="DnaA_N_sf"/>
</dbReference>
<dbReference type="InterPro" id="IPR027417">
    <property type="entry name" value="P-loop_NTPase"/>
</dbReference>
<dbReference type="InterPro" id="IPR010921">
    <property type="entry name" value="Trp_repressor/repl_initiator"/>
</dbReference>
<dbReference type="NCBIfam" id="TIGR00362">
    <property type="entry name" value="DnaA"/>
    <property type="match status" value="1"/>
</dbReference>
<dbReference type="PANTHER" id="PTHR30050">
    <property type="entry name" value="CHROMOSOMAL REPLICATION INITIATOR PROTEIN DNAA"/>
    <property type="match status" value="1"/>
</dbReference>
<dbReference type="PANTHER" id="PTHR30050:SF2">
    <property type="entry name" value="CHROMOSOMAL REPLICATION INITIATOR PROTEIN DNAA"/>
    <property type="match status" value="1"/>
</dbReference>
<dbReference type="Pfam" id="PF00308">
    <property type="entry name" value="Bac_DnaA"/>
    <property type="match status" value="1"/>
</dbReference>
<dbReference type="Pfam" id="PF08299">
    <property type="entry name" value="Bac_DnaA_C"/>
    <property type="match status" value="1"/>
</dbReference>
<dbReference type="Pfam" id="PF11638">
    <property type="entry name" value="DnaA_N"/>
    <property type="match status" value="1"/>
</dbReference>
<dbReference type="PRINTS" id="PR00051">
    <property type="entry name" value="DNAA"/>
</dbReference>
<dbReference type="SMART" id="SM00382">
    <property type="entry name" value="AAA"/>
    <property type="match status" value="1"/>
</dbReference>
<dbReference type="SMART" id="SM00760">
    <property type="entry name" value="Bac_DnaA_C"/>
    <property type="match status" value="1"/>
</dbReference>
<dbReference type="SUPFAM" id="SSF52540">
    <property type="entry name" value="P-loop containing nucleoside triphosphate hydrolases"/>
    <property type="match status" value="1"/>
</dbReference>
<dbReference type="SUPFAM" id="SSF48295">
    <property type="entry name" value="TrpR-like"/>
    <property type="match status" value="1"/>
</dbReference>
<dbReference type="PROSITE" id="PS01008">
    <property type="entry name" value="DNAA"/>
    <property type="match status" value="1"/>
</dbReference>
<keyword id="KW-0067">ATP-binding</keyword>
<keyword id="KW-0963">Cytoplasm</keyword>
<keyword id="KW-0235">DNA replication</keyword>
<keyword id="KW-0238">DNA-binding</keyword>
<keyword id="KW-0446">Lipid-binding</keyword>
<keyword id="KW-0547">Nucleotide-binding</keyword>
<feature type="chain" id="PRO_1000121940" description="Chromosomal replication initiator protein DnaA">
    <location>
        <begin position="1"/>
        <end position="465"/>
    </location>
</feature>
<feature type="region of interest" description="Domain I, interacts with DnaA modulators" evidence="1">
    <location>
        <begin position="1"/>
        <end position="87"/>
    </location>
</feature>
<feature type="region of interest" description="Disordered" evidence="2">
    <location>
        <begin position="81"/>
        <end position="123"/>
    </location>
</feature>
<feature type="region of interest" description="Domain II" evidence="1">
    <location>
        <begin position="88"/>
        <end position="127"/>
    </location>
</feature>
<feature type="region of interest" description="Domain III, AAA+ region" evidence="1">
    <location>
        <begin position="128"/>
        <end position="345"/>
    </location>
</feature>
<feature type="region of interest" description="Domain IV, binds dsDNA" evidence="1">
    <location>
        <begin position="346"/>
        <end position="465"/>
    </location>
</feature>
<feature type="compositionally biased region" description="Low complexity" evidence="2">
    <location>
        <begin position="88"/>
        <end position="100"/>
    </location>
</feature>
<feature type="binding site" evidence="1">
    <location>
        <position position="173"/>
    </location>
    <ligand>
        <name>ATP</name>
        <dbReference type="ChEBI" id="CHEBI:30616"/>
    </ligand>
</feature>
<feature type="binding site" evidence="1">
    <location>
        <position position="175"/>
    </location>
    <ligand>
        <name>ATP</name>
        <dbReference type="ChEBI" id="CHEBI:30616"/>
    </ligand>
</feature>
<feature type="binding site" evidence="1">
    <location>
        <position position="176"/>
    </location>
    <ligand>
        <name>ATP</name>
        <dbReference type="ChEBI" id="CHEBI:30616"/>
    </ligand>
</feature>
<feature type="binding site" evidence="1">
    <location>
        <position position="177"/>
    </location>
    <ligand>
        <name>ATP</name>
        <dbReference type="ChEBI" id="CHEBI:30616"/>
    </ligand>
</feature>
<accession>A3M0Q4</accession>
<comment type="function">
    <text evidence="1">Plays an essential role in the initiation and regulation of chromosomal replication. ATP-DnaA binds to the origin of replication (oriC) to initiate formation of the DNA replication initiation complex once per cell cycle. Binds the DnaA box (a 9 base pair repeat at the origin) and separates the double-stranded (ds)DNA. Forms a right-handed helical filament on oriC DNA; dsDNA binds to the exterior of the filament while single-stranded (ss)DNA is stabiized in the filament's interior. The ATP-DnaA-oriC complex binds and stabilizes one strand of the AT-rich DNA unwinding element (DUE), permitting loading of DNA polymerase. After initiation quickly degrades to an ADP-DnaA complex that is not apt for DNA replication. Binds acidic phospholipids.</text>
</comment>
<comment type="subunit">
    <text evidence="1">Oligomerizes as a right-handed, spiral filament on DNA at oriC.</text>
</comment>
<comment type="subcellular location">
    <subcellularLocation>
        <location evidence="1">Cytoplasm</location>
    </subcellularLocation>
</comment>
<comment type="domain">
    <text evidence="1">Domain I is involved in oligomerization and binding regulators, domain II is flexibile and of varying length in different bacteria, domain III forms the AAA+ region, while domain IV binds dsDNA.</text>
</comment>
<comment type="similarity">
    <text evidence="1">Belongs to the DnaA family.</text>
</comment>
<reference key="1">
    <citation type="journal article" date="2007" name="Genes Dev.">
        <title>New insights into Acinetobacter baumannii pathogenesis revealed by high-density pyrosequencing and transposon mutagenesis.</title>
        <authorList>
            <person name="Smith M.G."/>
            <person name="Gianoulis T.A."/>
            <person name="Pukatzki S."/>
            <person name="Mekalanos J.J."/>
            <person name="Ornston L.N."/>
            <person name="Gerstein M."/>
            <person name="Snyder M."/>
        </authorList>
    </citation>
    <scope>NUCLEOTIDE SEQUENCE [LARGE SCALE GENOMIC DNA]</scope>
    <source>
        <strain>ATCC 17978 / DSM 105126 / CIP 53.77 / LMG 1025 / NCDC KC755 / 5377</strain>
    </source>
</reference>
<name>DNAA_ACIBT</name>
<proteinExistence type="inferred from homology"/>
<evidence type="ECO:0000255" key="1">
    <source>
        <dbReference type="HAMAP-Rule" id="MF_00377"/>
    </source>
</evidence>
<evidence type="ECO:0000256" key="2">
    <source>
        <dbReference type="SAM" id="MobiDB-lite"/>
    </source>
</evidence>
<organism>
    <name type="scientific">Acinetobacter baumannii (strain ATCC 17978 / DSM 105126 / CIP 53.77 / LMG 1025 / NCDC KC755 / 5377)</name>
    <dbReference type="NCBI Taxonomy" id="400667"/>
    <lineage>
        <taxon>Bacteria</taxon>
        <taxon>Pseudomonadati</taxon>
        <taxon>Pseudomonadota</taxon>
        <taxon>Gammaproteobacteria</taxon>
        <taxon>Moraxellales</taxon>
        <taxon>Moraxellaceae</taxon>
        <taxon>Acinetobacter</taxon>
        <taxon>Acinetobacter calcoaceticus/baumannii complex</taxon>
    </lineage>
</organism>
<protein>
    <recommendedName>
        <fullName evidence="1">Chromosomal replication initiator protein DnaA</fullName>
    </recommendedName>
</protein>
<sequence length="465" mass="52277">MLWTDCLTRLRQELSDNVFAMWIRPLVAEEVEGILRLYAPNPYWTRYIQENHLELISILAEQLSEGRVRQVEILVDSRPGSILSSSEQPATTTAALQTAPIPQPAKVKREPEPVANTAVSSKSSKKKLLNPQFTFSLFVEGRSNQMAAETCRKVLTQLGASQHNPLFLYGPTGLGKTHLMQAVGNALLQAKPNARVMYMTSESFVQDFVSSLQKGKVEEFKKNCRSLDLLLVDDIHLLAGKEASLVEFFYTFNALLDESKQIILTSDRYPKELTELDPRLVSRFSWGLSVGVEPPDIETRIEILLKKAENSGVDLPRNCALFIAQQVVANVRELEGALNKVVAISRFKGAPIDLDVVRESLKDVLAIRARTISVENIQRVVSEYFRIPLKELIGPKRTRIYARPRQLAMGLARELTGDSFPEIGMAFGGRDHSTVMHACEKVVSLREEDPIFDEDYKNLLRLLQS</sequence>
<gene>
    <name evidence="1" type="primary">dnaA</name>
    <name type="ordered locus">A1S_0001</name>
</gene>